<feature type="chain" id="PRO_0000284252" description="Endoribonuclease YbeY">
    <location>
        <begin position="1"/>
        <end position="294"/>
    </location>
</feature>
<feature type="domain" description="Cupin type-2" evidence="2">
    <location>
        <begin position="45"/>
        <end position="111"/>
    </location>
</feature>
<feature type="region of interest" description="Endoribonuclease YbeY">
    <location>
        <begin position="123"/>
        <end position="294"/>
    </location>
</feature>
<feature type="binding site" evidence="1">
    <location>
        <position position="244"/>
    </location>
    <ligand>
        <name>Zn(2+)</name>
        <dbReference type="ChEBI" id="CHEBI:29105"/>
        <note>catalytic</note>
    </ligand>
</feature>
<feature type="binding site" evidence="1">
    <location>
        <position position="248"/>
    </location>
    <ligand>
        <name>Zn(2+)</name>
        <dbReference type="ChEBI" id="CHEBI:29105"/>
        <note>catalytic</note>
    </ligand>
</feature>
<feature type="binding site" evidence="1">
    <location>
        <position position="254"/>
    </location>
    <ligand>
        <name>Zn(2+)</name>
        <dbReference type="ChEBI" id="CHEBI:29105"/>
        <note>catalytic</note>
    </ligand>
</feature>
<sequence>MSGARRGNGVRLRKGKLIPRDDGKRIEEFVGAATTSTDSASVARMLAPPGWSEPAQRPEFDEVVIVLTGELTIVVEGRRERISAGEVGLVPRGKRVVYRNDGQGACDYWSVCAPAFRPELAHMETPKPRVQENHVTIQVAHGQGRDFARLLTTWARAYLVQLELSGVELSLSLVDDRAIRRLNRTWRKKDKATDVLSFPAGDLPKGTPGPRPLGDVVISLDTAKRQAKEYGRTLESEMARYLAHGLLHLLGHDHERPRDAKRMAALEEQLLGERGMVADSLQVDAKARRARSLM</sequence>
<gene>
    <name type="primary">ybeY</name>
    <name type="ordered locus">MXAN_4736</name>
</gene>
<accession>Q1D375</accession>
<proteinExistence type="inferred from homology"/>
<dbReference type="EC" id="3.1.-.-"/>
<dbReference type="EMBL" id="CP000113">
    <property type="protein sequence ID" value="ABF89694.1"/>
    <property type="molecule type" value="Genomic_DNA"/>
</dbReference>
<dbReference type="RefSeq" id="WP_011554723.1">
    <property type="nucleotide sequence ID" value="NC_008095.1"/>
</dbReference>
<dbReference type="SMR" id="Q1D375"/>
<dbReference type="STRING" id="246197.MXAN_4736"/>
<dbReference type="EnsemblBacteria" id="ABF89694">
    <property type="protein sequence ID" value="ABF89694"/>
    <property type="gene ID" value="MXAN_4736"/>
</dbReference>
<dbReference type="GeneID" id="41362035"/>
<dbReference type="KEGG" id="mxa:MXAN_4736"/>
<dbReference type="eggNOG" id="COG0319">
    <property type="taxonomic scope" value="Bacteria"/>
</dbReference>
<dbReference type="eggNOG" id="COG0662">
    <property type="taxonomic scope" value="Bacteria"/>
</dbReference>
<dbReference type="HOGENOM" id="CLU_946034_0_0_7"/>
<dbReference type="Proteomes" id="UP000002402">
    <property type="component" value="Chromosome"/>
</dbReference>
<dbReference type="GO" id="GO:0005737">
    <property type="term" value="C:cytoplasm"/>
    <property type="evidence" value="ECO:0007669"/>
    <property type="project" value="UniProtKB-SubCell"/>
</dbReference>
<dbReference type="GO" id="GO:0004222">
    <property type="term" value="F:metalloendopeptidase activity"/>
    <property type="evidence" value="ECO:0007669"/>
    <property type="project" value="InterPro"/>
</dbReference>
<dbReference type="GO" id="GO:0004521">
    <property type="term" value="F:RNA endonuclease activity"/>
    <property type="evidence" value="ECO:0007669"/>
    <property type="project" value="UniProtKB-UniRule"/>
</dbReference>
<dbReference type="GO" id="GO:0008270">
    <property type="term" value="F:zinc ion binding"/>
    <property type="evidence" value="ECO:0007669"/>
    <property type="project" value="UniProtKB-UniRule"/>
</dbReference>
<dbReference type="GO" id="GO:0006364">
    <property type="term" value="P:rRNA processing"/>
    <property type="evidence" value="ECO:0007669"/>
    <property type="project" value="UniProtKB-UniRule"/>
</dbReference>
<dbReference type="Gene3D" id="2.60.120.10">
    <property type="entry name" value="Jelly Rolls"/>
    <property type="match status" value="1"/>
</dbReference>
<dbReference type="Gene3D" id="3.40.390.30">
    <property type="entry name" value="Metalloproteases ('zincins'), catalytic domain"/>
    <property type="match status" value="1"/>
</dbReference>
<dbReference type="HAMAP" id="MF_00009">
    <property type="entry name" value="Endoribonucl_YbeY"/>
    <property type="match status" value="1"/>
</dbReference>
<dbReference type="InterPro" id="IPR013096">
    <property type="entry name" value="Cupin_2"/>
</dbReference>
<dbReference type="InterPro" id="IPR023091">
    <property type="entry name" value="MetalPrtase_cat_dom_sf_prd"/>
</dbReference>
<dbReference type="InterPro" id="IPR014710">
    <property type="entry name" value="RmlC-like_jellyroll"/>
</dbReference>
<dbReference type="InterPro" id="IPR011051">
    <property type="entry name" value="RmlC_Cupin_sf"/>
</dbReference>
<dbReference type="InterPro" id="IPR002036">
    <property type="entry name" value="YbeY"/>
</dbReference>
<dbReference type="InterPro" id="IPR020549">
    <property type="entry name" value="YbeY_CS"/>
</dbReference>
<dbReference type="NCBIfam" id="TIGR00043">
    <property type="entry name" value="rRNA maturation RNase YbeY"/>
    <property type="match status" value="1"/>
</dbReference>
<dbReference type="PANTHER" id="PTHR46986">
    <property type="entry name" value="ENDORIBONUCLEASE YBEY, CHLOROPLASTIC"/>
    <property type="match status" value="1"/>
</dbReference>
<dbReference type="PANTHER" id="PTHR46986:SF1">
    <property type="entry name" value="ENDORIBONUCLEASE YBEY, CHLOROPLASTIC"/>
    <property type="match status" value="1"/>
</dbReference>
<dbReference type="Pfam" id="PF07883">
    <property type="entry name" value="Cupin_2"/>
    <property type="match status" value="1"/>
</dbReference>
<dbReference type="Pfam" id="PF02130">
    <property type="entry name" value="YbeY"/>
    <property type="match status" value="1"/>
</dbReference>
<dbReference type="SUPFAM" id="SSF55486">
    <property type="entry name" value="Metalloproteases ('zincins'), catalytic domain"/>
    <property type="match status" value="1"/>
</dbReference>
<dbReference type="SUPFAM" id="SSF51182">
    <property type="entry name" value="RmlC-like cupins"/>
    <property type="match status" value="1"/>
</dbReference>
<dbReference type="PROSITE" id="PS01306">
    <property type="entry name" value="UPF0054"/>
    <property type="match status" value="1"/>
</dbReference>
<name>YBEY_MYXXD</name>
<keyword id="KW-0963">Cytoplasm</keyword>
<keyword id="KW-0255">Endonuclease</keyword>
<keyword id="KW-0378">Hydrolase</keyword>
<keyword id="KW-0479">Metal-binding</keyword>
<keyword id="KW-0540">Nuclease</keyword>
<keyword id="KW-1185">Reference proteome</keyword>
<keyword id="KW-0690">Ribosome biogenesis</keyword>
<keyword id="KW-0698">rRNA processing</keyword>
<keyword id="KW-0862">Zinc</keyword>
<protein>
    <recommendedName>
        <fullName>Endoribonuclease YbeY</fullName>
        <ecNumber>3.1.-.-</ecNumber>
    </recommendedName>
</protein>
<evidence type="ECO:0000250" key="1"/>
<evidence type="ECO:0000255" key="2"/>
<evidence type="ECO:0000305" key="3"/>
<organism>
    <name type="scientific">Myxococcus xanthus (strain DK1622)</name>
    <dbReference type="NCBI Taxonomy" id="246197"/>
    <lineage>
        <taxon>Bacteria</taxon>
        <taxon>Pseudomonadati</taxon>
        <taxon>Myxococcota</taxon>
        <taxon>Myxococcia</taxon>
        <taxon>Myxococcales</taxon>
        <taxon>Cystobacterineae</taxon>
        <taxon>Myxococcaceae</taxon>
        <taxon>Myxococcus</taxon>
    </lineage>
</organism>
<comment type="function">
    <text evidence="1">Single strand-specific metallo-endoribonuclease involved in late-stage 70S ribosome quality control and in maturation of the 3' terminus of the 16S rRNA.</text>
</comment>
<comment type="cofactor">
    <cofactor evidence="1">
        <name>Zn(2+)</name>
        <dbReference type="ChEBI" id="CHEBI:29105"/>
    </cofactor>
    <text evidence="1">Binds 1 zinc ion.</text>
</comment>
<comment type="subcellular location">
    <subcellularLocation>
        <location evidence="1">Cytoplasm</location>
    </subcellularLocation>
</comment>
<comment type="similarity">
    <text evidence="3">Belongs to the endoribonuclease YbeY family.</text>
</comment>
<reference key="1">
    <citation type="journal article" date="2006" name="Proc. Natl. Acad. Sci. U.S.A.">
        <title>Evolution of sensory complexity recorded in a myxobacterial genome.</title>
        <authorList>
            <person name="Goldman B.S."/>
            <person name="Nierman W.C."/>
            <person name="Kaiser D."/>
            <person name="Slater S.C."/>
            <person name="Durkin A.S."/>
            <person name="Eisen J.A."/>
            <person name="Ronning C.M."/>
            <person name="Barbazuk W.B."/>
            <person name="Blanchard M."/>
            <person name="Field C."/>
            <person name="Halling C."/>
            <person name="Hinkle G."/>
            <person name="Iartchuk O."/>
            <person name="Kim H.S."/>
            <person name="Mackenzie C."/>
            <person name="Madupu R."/>
            <person name="Miller N."/>
            <person name="Shvartsbeyn A."/>
            <person name="Sullivan S.A."/>
            <person name="Vaudin M."/>
            <person name="Wiegand R."/>
            <person name="Kaplan H.B."/>
        </authorList>
    </citation>
    <scope>NUCLEOTIDE SEQUENCE [LARGE SCALE GENOMIC DNA]</scope>
    <source>
        <strain>DK1622</strain>
    </source>
</reference>